<evidence type="ECO:0000255" key="1">
    <source>
        <dbReference type="HAMAP-Rule" id="MF_00386"/>
    </source>
</evidence>
<reference key="1">
    <citation type="journal article" date="2009" name="J. Bacteriol.">
        <title>Complete and draft genome sequences of six members of the Aquificales.</title>
        <authorList>
            <person name="Reysenbach A.-L."/>
            <person name="Hamamura N."/>
            <person name="Podar M."/>
            <person name="Griffiths E."/>
            <person name="Ferreira S."/>
            <person name="Hochstein R."/>
            <person name="Heidelberg J."/>
            <person name="Johnson J."/>
            <person name="Mead D."/>
            <person name="Pohorille A."/>
            <person name="Sarmiento M."/>
            <person name="Schweighofer K."/>
            <person name="Seshadri R."/>
            <person name="Voytek M.A."/>
        </authorList>
    </citation>
    <scope>NUCLEOTIDE SEQUENCE [LARGE SCALE GENOMIC DNA]</scope>
    <source>
        <strain>DSM 14350 / EX-H1</strain>
    </source>
</reference>
<organism>
    <name type="scientific">Persephonella marina (strain DSM 14350 / EX-H1)</name>
    <dbReference type="NCBI Taxonomy" id="123214"/>
    <lineage>
        <taxon>Bacteria</taxon>
        <taxon>Pseudomonadati</taxon>
        <taxon>Aquificota</taxon>
        <taxon>Aquificia</taxon>
        <taxon>Aquificales</taxon>
        <taxon>Hydrogenothermaceae</taxon>
        <taxon>Persephonella</taxon>
    </lineage>
</organism>
<feature type="chain" id="PRO_1000197768" description="Putative membrane protein insertion efficiency factor">
    <location>
        <begin position="1"/>
        <end position="68"/>
    </location>
</feature>
<dbReference type="EMBL" id="CP001230">
    <property type="protein sequence ID" value="ACO03282.1"/>
    <property type="molecule type" value="Genomic_DNA"/>
</dbReference>
<dbReference type="RefSeq" id="WP_012675521.1">
    <property type="nucleotide sequence ID" value="NC_012440.1"/>
</dbReference>
<dbReference type="STRING" id="123214.PERMA_0195"/>
<dbReference type="PaxDb" id="123214-PERMA_0195"/>
<dbReference type="KEGG" id="pmx:PERMA_0195"/>
<dbReference type="eggNOG" id="COG0759">
    <property type="taxonomic scope" value="Bacteria"/>
</dbReference>
<dbReference type="HOGENOM" id="CLU_144811_6_0_0"/>
<dbReference type="OrthoDB" id="9801753at2"/>
<dbReference type="Proteomes" id="UP000001366">
    <property type="component" value="Chromosome"/>
</dbReference>
<dbReference type="GO" id="GO:0005886">
    <property type="term" value="C:plasma membrane"/>
    <property type="evidence" value="ECO:0007669"/>
    <property type="project" value="UniProtKB-SubCell"/>
</dbReference>
<dbReference type="HAMAP" id="MF_00386">
    <property type="entry name" value="UPF0161_YidD"/>
    <property type="match status" value="1"/>
</dbReference>
<dbReference type="InterPro" id="IPR002696">
    <property type="entry name" value="Membr_insert_effic_factor_YidD"/>
</dbReference>
<dbReference type="NCBIfam" id="TIGR00278">
    <property type="entry name" value="membrane protein insertion efficiency factor YidD"/>
    <property type="match status" value="1"/>
</dbReference>
<dbReference type="PANTHER" id="PTHR33383">
    <property type="entry name" value="MEMBRANE PROTEIN INSERTION EFFICIENCY FACTOR-RELATED"/>
    <property type="match status" value="1"/>
</dbReference>
<dbReference type="PANTHER" id="PTHR33383:SF1">
    <property type="entry name" value="MEMBRANE PROTEIN INSERTION EFFICIENCY FACTOR-RELATED"/>
    <property type="match status" value="1"/>
</dbReference>
<dbReference type="Pfam" id="PF01809">
    <property type="entry name" value="YidD"/>
    <property type="match status" value="1"/>
</dbReference>
<dbReference type="SMART" id="SM01234">
    <property type="entry name" value="Haemolytic"/>
    <property type="match status" value="1"/>
</dbReference>
<accession>C0QTH8</accession>
<keyword id="KW-0997">Cell inner membrane</keyword>
<keyword id="KW-1003">Cell membrane</keyword>
<keyword id="KW-0472">Membrane</keyword>
<keyword id="KW-1185">Reference proteome</keyword>
<name>YIDD_PERMH</name>
<proteinExistence type="inferred from homology"/>
<gene>
    <name type="ordered locus">PERMA_0195</name>
</gene>
<protein>
    <recommendedName>
        <fullName evidence="1">Putative membrane protein insertion efficiency factor</fullName>
    </recommendedName>
</protein>
<comment type="function">
    <text evidence="1">Could be involved in insertion of integral membrane proteins into the membrane.</text>
</comment>
<comment type="subcellular location">
    <subcellularLocation>
        <location evidence="1">Cell inner membrane</location>
        <topology evidence="1">Peripheral membrane protein</topology>
        <orientation evidence="1">Cytoplasmic side</orientation>
    </subcellularLocation>
</comment>
<comment type="similarity">
    <text evidence="1">Belongs to the UPF0161 family.</text>
</comment>
<sequence length="68" mass="7795">MDRFLIKLIKIYKKFVSPALPNSCRYYPTCSSYAIQSIEKYGALKGSLKAVWRILRCNPFSKGGVDYP</sequence>